<comment type="function">
    <text evidence="1">Cell wall formation.</text>
</comment>
<comment type="catalytic activity">
    <reaction evidence="1">
        <text>UDP-N-acetyl-alpha-D-muramate + L-alanine + ATP = UDP-N-acetyl-alpha-D-muramoyl-L-alanine + ADP + phosphate + H(+)</text>
        <dbReference type="Rhea" id="RHEA:23372"/>
        <dbReference type="ChEBI" id="CHEBI:15378"/>
        <dbReference type="ChEBI" id="CHEBI:30616"/>
        <dbReference type="ChEBI" id="CHEBI:43474"/>
        <dbReference type="ChEBI" id="CHEBI:57972"/>
        <dbReference type="ChEBI" id="CHEBI:70757"/>
        <dbReference type="ChEBI" id="CHEBI:83898"/>
        <dbReference type="ChEBI" id="CHEBI:456216"/>
        <dbReference type="EC" id="6.3.2.8"/>
    </reaction>
</comment>
<comment type="pathway">
    <text evidence="1">Cell wall biogenesis; peptidoglycan biosynthesis.</text>
</comment>
<comment type="subcellular location">
    <subcellularLocation>
        <location evidence="1">Cytoplasm</location>
    </subcellularLocation>
</comment>
<comment type="similarity">
    <text evidence="1">Belongs to the MurCDEF family.</text>
</comment>
<sequence length="451" mass="49788">MNKKILFLGVGGIGVSALAIAAKRLGAHVAGYDSVANKLTAKLEALGIVIFISPNGVDVANFDIVVYSSAILSSHPLLSQARSLGIQCLQRAMFLAVLMKDFSYSLAITGTHGKTTTSSVLATLLCQLDKYSSFIVGGVVKYADSNIQVNGTDKLVIEADESDASFLFLSPQVVIITNIDLDHMATYNNSYQTLLENFTDFVSKESVKSIYLCVDDQGCRDLLAKYNQSDKNVTSYGFSINADVQIYDYHIIDEITHFKIRYKGDDLSFKLQLPGRYNVQNATACIITCLDLGFKYEDIRNALIKVTGVARRFDLYTKVISGHQVTVIDDYGHHPVEVANSISAVRDRYPNKKIIHVFQPHRYTRNRDLIKDWPKALSLADQLILLPTYSADEQIIKGAESQDIVKGLSGYLLADGFDHAIYFLEKLANENTVILIQGAGDVTNLVEILSE</sequence>
<reference key="1">
    <citation type="submission" date="2006-03" db="EMBL/GenBank/DDBJ databases">
        <title>Complete genome sequence of Francisella tularensis LVS (Live Vaccine Strain).</title>
        <authorList>
            <person name="Chain P."/>
            <person name="Larimer F."/>
            <person name="Land M."/>
            <person name="Stilwagen S."/>
            <person name="Larsson P."/>
            <person name="Bearden S."/>
            <person name="Chu M."/>
            <person name="Oyston P."/>
            <person name="Forsman M."/>
            <person name="Andersson S."/>
            <person name="Lindler L."/>
            <person name="Titball R."/>
            <person name="Garcia E."/>
        </authorList>
    </citation>
    <scope>NUCLEOTIDE SEQUENCE [LARGE SCALE GENOMIC DNA]</scope>
    <source>
        <strain>LVS</strain>
    </source>
</reference>
<accession>Q2A5N4</accession>
<dbReference type="EC" id="6.3.2.8" evidence="1"/>
<dbReference type="EMBL" id="AM233362">
    <property type="protein sequence ID" value="CAJ78613.1"/>
    <property type="molecule type" value="Genomic_DNA"/>
</dbReference>
<dbReference type="RefSeq" id="WP_003014165.1">
    <property type="nucleotide sequence ID" value="NZ_CP009694.1"/>
</dbReference>
<dbReference type="SMR" id="Q2A5N4"/>
<dbReference type="KEGG" id="ftl:FTL_0172"/>
<dbReference type="UniPathway" id="UPA00219"/>
<dbReference type="Proteomes" id="UP000001944">
    <property type="component" value="Chromosome"/>
</dbReference>
<dbReference type="GO" id="GO:0005737">
    <property type="term" value="C:cytoplasm"/>
    <property type="evidence" value="ECO:0007669"/>
    <property type="project" value="UniProtKB-SubCell"/>
</dbReference>
<dbReference type="GO" id="GO:0005524">
    <property type="term" value="F:ATP binding"/>
    <property type="evidence" value="ECO:0007669"/>
    <property type="project" value="UniProtKB-UniRule"/>
</dbReference>
<dbReference type="GO" id="GO:0008763">
    <property type="term" value="F:UDP-N-acetylmuramate-L-alanine ligase activity"/>
    <property type="evidence" value="ECO:0007669"/>
    <property type="project" value="UniProtKB-UniRule"/>
</dbReference>
<dbReference type="GO" id="GO:0051301">
    <property type="term" value="P:cell division"/>
    <property type="evidence" value="ECO:0007669"/>
    <property type="project" value="UniProtKB-KW"/>
</dbReference>
<dbReference type="GO" id="GO:0071555">
    <property type="term" value="P:cell wall organization"/>
    <property type="evidence" value="ECO:0007669"/>
    <property type="project" value="UniProtKB-KW"/>
</dbReference>
<dbReference type="GO" id="GO:0009252">
    <property type="term" value="P:peptidoglycan biosynthetic process"/>
    <property type="evidence" value="ECO:0007669"/>
    <property type="project" value="UniProtKB-UniRule"/>
</dbReference>
<dbReference type="GO" id="GO:0008360">
    <property type="term" value="P:regulation of cell shape"/>
    <property type="evidence" value="ECO:0007669"/>
    <property type="project" value="UniProtKB-KW"/>
</dbReference>
<dbReference type="Gene3D" id="3.90.190.20">
    <property type="entry name" value="Mur ligase, C-terminal domain"/>
    <property type="match status" value="1"/>
</dbReference>
<dbReference type="Gene3D" id="3.40.1190.10">
    <property type="entry name" value="Mur-like, catalytic domain"/>
    <property type="match status" value="1"/>
</dbReference>
<dbReference type="Gene3D" id="3.40.50.720">
    <property type="entry name" value="NAD(P)-binding Rossmann-like Domain"/>
    <property type="match status" value="1"/>
</dbReference>
<dbReference type="HAMAP" id="MF_00046">
    <property type="entry name" value="MurC"/>
    <property type="match status" value="1"/>
</dbReference>
<dbReference type="InterPro" id="IPR036565">
    <property type="entry name" value="Mur-like_cat_sf"/>
</dbReference>
<dbReference type="InterPro" id="IPR004101">
    <property type="entry name" value="Mur_ligase_C"/>
</dbReference>
<dbReference type="InterPro" id="IPR036615">
    <property type="entry name" value="Mur_ligase_C_dom_sf"/>
</dbReference>
<dbReference type="InterPro" id="IPR013221">
    <property type="entry name" value="Mur_ligase_cen"/>
</dbReference>
<dbReference type="InterPro" id="IPR000713">
    <property type="entry name" value="Mur_ligase_N"/>
</dbReference>
<dbReference type="InterPro" id="IPR050061">
    <property type="entry name" value="MurCDEF_pg_biosynth"/>
</dbReference>
<dbReference type="InterPro" id="IPR005758">
    <property type="entry name" value="UDP-N-AcMur_Ala_ligase_MurC"/>
</dbReference>
<dbReference type="NCBIfam" id="TIGR01082">
    <property type="entry name" value="murC"/>
    <property type="match status" value="1"/>
</dbReference>
<dbReference type="PANTHER" id="PTHR43445:SF3">
    <property type="entry name" value="UDP-N-ACETYLMURAMATE--L-ALANINE LIGASE"/>
    <property type="match status" value="1"/>
</dbReference>
<dbReference type="PANTHER" id="PTHR43445">
    <property type="entry name" value="UDP-N-ACETYLMURAMATE--L-ALANINE LIGASE-RELATED"/>
    <property type="match status" value="1"/>
</dbReference>
<dbReference type="Pfam" id="PF01225">
    <property type="entry name" value="Mur_ligase"/>
    <property type="match status" value="1"/>
</dbReference>
<dbReference type="Pfam" id="PF02875">
    <property type="entry name" value="Mur_ligase_C"/>
    <property type="match status" value="1"/>
</dbReference>
<dbReference type="Pfam" id="PF08245">
    <property type="entry name" value="Mur_ligase_M"/>
    <property type="match status" value="1"/>
</dbReference>
<dbReference type="SUPFAM" id="SSF51984">
    <property type="entry name" value="MurCD N-terminal domain"/>
    <property type="match status" value="1"/>
</dbReference>
<dbReference type="SUPFAM" id="SSF53623">
    <property type="entry name" value="MurD-like peptide ligases, catalytic domain"/>
    <property type="match status" value="1"/>
</dbReference>
<dbReference type="SUPFAM" id="SSF53244">
    <property type="entry name" value="MurD-like peptide ligases, peptide-binding domain"/>
    <property type="match status" value="1"/>
</dbReference>
<proteinExistence type="inferred from homology"/>
<protein>
    <recommendedName>
        <fullName evidence="1">UDP-N-acetylmuramate--L-alanine ligase</fullName>
        <ecNumber evidence="1">6.3.2.8</ecNumber>
    </recommendedName>
    <alternativeName>
        <fullName evidence="1">UDP-N-acetylmuramoyl-L-alanine synthetase</fullName>
    </alternativeName>
</protein>
<organism>
    <name type="scientific">Francisella tularensis subsp. holarctica (strain LVS)</name>
    <dbReference type="NCBI Taxonomy" id="376619"/>
    <lineage>
        <taxon>Bacteria</taxon>
        <taxon>Pseudomonadati</taxon>
        <taxon>Pseudomonadota</taxon>
        <taxon>Gammaproteobacteria</taxon>
        <taxon>Thiotrichales</taxon>
        <taxon>Francisellaceae</taxon>
        <taxon>Francisella</taxon>
    </lineage>
</organism>
<evidence type="ECO:0000255" key="1">
    <source>
        <dbReference type="HAMAP-Rule" id="MF_00046"/>
    </source>
</evidence>
<keyword id="KW-0067">ATP-binding</keyword>
<keyword id="KW-0131">Cell cycle</keyword>
<keyword id="KW-0132">Cell division</keyword>
<keyword id="KW-0133">Cell shape</keyword>
<keyword id="KW-0961">Cell wall biogenesis/degradation</keyword>
<keyword id="KW-0963">Cytoplasm</keyword>
<keyword id="KW-0436">Ligase</keyword>
<keyword id="KW-0547">Nucleotide-binding</keyword>
<keyword id="KW-0573">Peptidoglycan synthesis</keyword>
<keyword id="KW-1185">Reference proteome</keyword>
<name>MURC_FRATH</name>
<gene>
    <name evidence="1" type="primary">murC</name>
    <name type="ordered locus">FTL_0172</name>
</gene>
<feature type="chain" id="PRO_0000242556" description="UDP-N-acetylmuramate--L-alanine ligase">
    <location>
        <begin position="1"/>
        <end position="451"/>
    </location>
</feature>
<feature type="binding site" evidence="1">
    <location>
        <begin position="110"/>
        <end position="116"/>
    </location>
    <ligand>
        <name>ATP</name>
        <dbReference type="ChEBI" id="CHEBI:30616"/>
    </ligand>
</feature>